<accession>Q5R7K0</accession>
<evidence type="ECO:0000250" key="1"/>
<evidence type="ECO:0000250" key="2">
    <source>
        <dbReference type="UniProtKB" id="Q3SXM5"/>
    </source>
</evidence>
<evidence type="ECO:0000305" key="3"/>
<keyword id="KW-0007">Acetylation</keyword>
<keyword id="KW-0496">Mitochondrion</keyword>
<keyword id="KW-0521">NADP</keyword>
<keyword id="KW-1185">Reference proteome</keyword>
<proteinExistence type="evidence at transcript level"/>
<dbReference type="EMBL" id="CR860115">
    <property type="protein sequence ID" value="CAH92260.1"/>
    <property type="molecule type" value="mRNA"/>
</dbReference>
<dbReference type="RefSeq" id="NP_001126323.1">
    <property type="nucleotide sequence ID" value="NM_001132851.1"/>
</dbReference>
<dbReference type="RefSeq" id="XP_009249266.1">
    <property type="nucleotide sequence ID" value="XM_009250991.3"/>
</dbReference>
<dbReference type="SMR" id="Q5R7K0"/>
<dbReference type="FunCoup" id="Q5R7K0">
    <property type="interactions" value="1933"/>
</dbReference>
<dbReference type="STRING" id="9601.ENSPPYP00000008575"/>
<dbReference type="Ensembl" id="ENSPPYT00000008923.3">
    <property type="protein sequence ID" value="ENSPPYP00000008575.2"/>
    <property type="gene ID" value="ENSPPYG00000007598.3"/>
</dbReference>
<dbReference type="GeneID" id="100173303"/>
<dbReference type="KEGG" id="pon:100173303"/>
<dbReference type="CTD" id="83693"/>
<dbReference type="eggNOG" id="KOG1014">
    <property type="taxonomic scope" value="Eukaryota"/>
</dbReference>
<dbReference type="GeneTree" id="ENSGT00940000160053"/>
<dbReference type="HOGENOM" id="CLU_010194_38_0_1"/>
<dbReference type="InParanoid" id="Q5R7K0"/>
<dbReference type="OrthoDB" id="5545019at2759"/>
<dbReference type="TreeFam" id="TF314591"/>
<dbReference type="Proteomes" id="UP000001595">
    <property type="component" value="Chromosome 16"/>
</dbReference>
<dbReference type="GO" id="GO:0045111">
    <property type="term" value="C:intermediate filament cytoskeleton"/>
    <property type="evidence" value="ECO:0007669"/>
    <property type="project" value="Ensembl"/>
</dbReference>
<dbReference type="GO" id="GO:0005739">
    <property type="term" value="C:mitochondrion"/>
    <property type="evidence" value="ECO:0000250"/>
    <property type="project" value="UniProtKB"/>
</dbReference>
<dbReference type="CDD" id="cd05356">
    <property type="entry name" value="17beta-HSD1_like_SDR_c"/>
    <property type="match status" value="1"/>
</dbReference>
<dbReference type="FunFam" id="3.40.50.720:FF:000137">
    <property type="entry name" value="Hydroxysteroid (17-beta) dehydrogenase 3"/>
    <property type="match status" value="1"/>
</dbReference>
<dbReference type="Gene3D" id="3.40.50.720">
    <property type="entry name" value="NAD(P)-binding Rossmann-like Domain"/>
    <property type="match status" value="1"/>
</dbReference>
<dbReference type="InterPro" id="IPR052149">
    <property type="entry name" value="17-beta-HSD3-like"/>
</dbReference>
<dbReference type="InterPro" id="IPR036291">
    <property type="entry name" value="NAD(P)-bd_dom_sf"/>
</dbReference>
<dbReference type="InterPro" id="IPR002347">
    <property type="entry name" value="SDR_fam"/>
</dbReference>
<dbReference type="PANTHER" id="PTHR44889">
    <property type="entry name" value="INACTIVE HYDROXYSTEROID DEHYDROGENASE-LIKE PROTEIN 1"/>
    <property type="match status" value="1"/>
</dbReference>
<dbReference type="PANTHER" id="PTHR44889:SF1">
    <property type="entry name" value="INACTIVE HYDROXYSTEROID DEHYDROGENASE-LIKE PROTEIN 1"/>
    <property type="match status" value="1"/>
</dbReference>
<dbReference type="Pfam" id="PF00106">
    <property type="entry name" value="adh_short"/>
    <property type="match status" value="1"/>
</dbReference>
<dbReference type="PIRSF" id="PIRSF000126">
    <property type="entry name" value="11-beta-HSD1"/>
    <property type="match status" value="1"/>
</dbReference>
<dbReference type="PRINTS" id="PR00081">
    <property type="entry name" value="GDHRDH"/>
</dbReference>
<dbReference type="PRINTS" id="PR00080">
    <property type="entry name" value="SDRFAMILY"/>
</dbReference>
<dbReference type="SUPFAM" id="SSF51735">
    <property type="entry name" value="NAD(P)-binding Rossmann-fold domains"/>
    <property type="match status" value="1"/>
</dbReference>
<comment type="subunit">
    <text evidence="1">Interacts with STYXL1.</text>
</comment>
<comment type="subcellular location">
    <subcellularLocation>
        <location evidence="1">Mitochondrion</location>
    </subcellularLocation>
</comment>
<comment type="similarity">
    <text evidence="3">Belongs to the short-chain dehydrogenases/reductases (SDR) family. 17-beta-HSD 3 subfamily.</text>
</comment>
<comment type="caution">
    <text evidence="3">Although it belongs to the SDR family, Phe-218 is present instead of the conserved Tyr which is an active site residue. It is therefore expected that this protein lacks oxidoreductase activity.</text>
</comment>
<reference key="1">
    <citation type="submission" date="2004-11" db="EMBL/GenBank/DDBJ databases">
        <authorList>
            <consortium name="The German cDNA consortium"/>
        </authorList>
    </citation>
    <scope>NUCLEOTIDE SEQUENCE [LARGE SCALE MRNA]</scope>
    <source>
        <tissue>Brain cortex</tissue>
    </source>
</reference>
<organism>
    <name type="scientific">Pongo abelii</name>
    <name type="common">Sumatran orangutan</name>
    <name type="synonym">Pongo pygmaeus abelii</name>
    <dbReference type="NCBI Taxonomy" id="9601"/>
    <lineage>
        <taxon>Eukaryota</taxon>
        <taxon>Metazoa</taxon>
        <taxon>Chordata</taxon>
        <taxon>Craniata</taxon>
        <taxon>Vertebrata</taxon>
        <taxon>Euteleostomi</taxon>
        <taxon>Mammalia</taxon>
        <taxon>Eutheria</taxon>
        <taxon>Euarchontoglires</taxon>
        <taxon>Primates</taxon>
        <taxon>Haplorrhini</taxon>
        <taxon>Catarrhini</taxon>
        <taxon>Hominidae</taxon>
        <taxon>Pongo</taxon>
    </lineage>
</organism>
<sequence length="330" mass="36959">MAAVDSFYLLYREIARSCNCYMEALALVGAWYTARKSITVICDFYSLIRLHFIPRLGSRADLIKQYGRWAVVSGATDGIGRAYAEELASRGLNIILISRNEEKLQVVAKDIADTYKVETGIIVADFSSGREIYLPIREALKDKDIGILVNNVGVFYPYPQYFTQLSEDKLWDIINVNIAAASLMVHVVLPGMVERKKGAIVTISSGSCCKPTPQLAAFSASKAYLDHFSRALQYEYASKGIFVQSLIPFYVATSMTAPSSFLHRCSWLVPSPKVYAHHAVSTLGISKRTTGYWSHSIQFLFAQYMPEWLWVWGANILNRSLRKEALSCTA</sequence>
<protein>
    <recommendedName>
        <fullName>Inactive hydroxysteroid dehydrogenase-like protein 1</fullName>
    </recommendedName>
</protein>
<feature type="initiator methionine" description="Removed" evidence="2">
    <location>
        <position position="1"/>
    </location>
</feature>
<feature type="chain" id="PRO_0000313673" description="Inactive hydroxysteroid dehydrogenase-like protein 1">
    <location>
        <begin position="2"/>
        <end position="330"/>
    </location>
</feature>
<feature type="region of interest" description="Required for mitochondria translocation" evidence="1">
    <location>
        <begin position="2"/>
        <end position="82"/>
    </location>
</feature>
<feature type="binding site" evidence="1">
    <location>
        <begin position="74"/>
        <end position="80"/>
    </location>
    <ligand>
        <name>NADP(+)</name>
        <dbReference type="ChEBI" id="CHEBI:58349"/>
    </ligand>
</feature>
<feature type="binding site" evidence="1">
    <location>
        <position position="125"/>
    </location>
    <ligand>
        <name>NADP(+)</name>
        <dbReference type="ChEBI" id="CHEBI:58349"/>
    </ligand>
</feature>
<feature type="binding site" evidence="1">
    <location>
        <position position="222"/>
    </location>
    <ligand>
        <name>NADP(+)</name>
        <dbReference type="ChEBI" id="CHEBI:58349"/>
    </ligand>
</feature>
<feature type="modified residue" description="N-acetylalanine" evidence="2">
    <location>
        <position position="2"/>
    </location>
</feature>
<name>HSDL1_PONAB</name>
<gene>
    <name type="primary">HSDL1</name>
</gene>